<feature type="chain" id="PRO_0000344919" description="Ribonuclease Y">
    <location>
        <begin position="1"/>
        <end position="521"/>
    </location>
</feature>
<feature type="transmembrane region" description="Helical" evidence="1">
    <location>
        <begin position="3"/>
        <end position="23"/>
    </location>
</feature>
<feature type="domain" description="KH" evidence="1">
    <location>
        <begin position="211"/>
        <end position="271"/>
    </location>
</feature>
<feature type="domain" description="HD" evidence="2">
    <location>
        <begin position="337"/>
        <end position="430"/>
    </location>
</feature>
<evidence type="ECO:0000255" key="1">
    <source>
        <dbReference type="HAMAP-Rule" id="MF_00335"/>
    </source>
</evidence>
<evidence type="ECO:0000255" key="2">
    <source>
        <dbReference type="PROSITE-ProRule" id="PRU01175"/>
    </source>
</evidence>
<dbReference type="EC" id="3.1.-.-" evidence="1"/>
<dbReference type="EMBL" id="CP000482">
    <property type="protein sequence ID" value="ABL00905.1"/>
    <property type="molecule type" value="Genomic_DNA"/>
</dbReference>
<dbReference type="SMR" id="A1AU84"/>
<dbReference type="STRING" id="338966.Ppro_3312"/>
<dbReference type="KEGG" id="ppd:Ppro_3312"/>
<dbReference type="eggNOG" id="COG1418">
    <property type="taxonomic scope" value="Bacteria"/>
</dbReference>
<dbReference type="HOGENOM" id="CLU_028328_1_0_7"/>
<dbReference type="OrthoDB" id="9803205at2"/>
<dbReference type="Proteomes" id="UP000006732">
    <property type="component" value="Chromosome"/>
</dbReference>
<dbReference type="GO" id="GO:0005886">
    <property type="term" value="C:plasma membrane"/>
    <property type="evidence" value="ECO:0007669"/>
    <property type="project" value="UniProtKB-SubCell"/>
</dbReference>
<dbReference type="GO" id="GO:0003723">
    <property type="term" value="F:RNA binding"/>
    <property type="evidence" value="ECO:0007669"/>
    <property type="project" value="UniProtKB-UniRule"/>
</dbReference>
<dbReference type="GO" id="GO:0004521">
    <property type="term" value="F:RNA endonuclease activity"/>
    <property type="evidence" value="ECO:0007669"/>
    <property type="project" value="UniProtKB-UniRule"/>
</dbReference>
<dbReference type="GO" id="GO:0006402">
    <property type="term" value="P:mRNA catabolic process"/>
    <property type="evidence" value="ECO:0007669"/>
    <property type="project" value="UniProtKB-UniRule"/>
</dbReference>
<dbReference type="CDD" id="cd00077">
    <property type="entry name" value="HDc"/>
    <property type="match status" value="1"/>
</dbReference>
<dbReference type="CDD" id="cd22431">
    <property type="entry name" value="KH-I_RNaseY"/>
    <property type="match status" value="1"/>
</dbReference>
<dbReference type="FunFam" id="1.10.3210.10:FF:000022">
    <property type="entry name" value="Ribonuclease Y"/>
    <property type="match status" value="1"/>
</dbReference>
<dbReference type="Gene3D" id="1.10.3210.10">
    <property type="entry name" value="Hypothetical protein af1432"/>
    <property type="match status" value="1"/>
</dbReference>
<dbReference type="HAMAP" id="MF_00335">
    <property type="entry name" value="RNase_Y"/>
    <property type="match status" value="1"/>
</dbReference>
<dbReference type="InterPro" id="IPR003607">
    <property type="entry name" value="HD/PDEase_dom"/>
</dbReference>
<dbReference type="InterPro" id="IPR006674">
    <property type="entry name" value="HD_domain"/>
</dbReference>
<dbReference type="InterPro" id="IPR006675">
    <property type="entry name" value="HDIG_dom"/>
</dbReference>
<dbReference type="InterPro" id="IPR004087">
    <property type="entry name" value="KH_dom"/>
</dbReference>
<dbReference type="InterPro" id="IPR004088">
    <property type="entry name" value="KH_dom_type_1"/>
</dbReference>
<dbReference type="InterPro" id="IPR036612">
    <property type="entry name" value="KH_dom_type_1_sf"/>
</dbReference>
<dbReference type="InterPro" id="IPR017705">
    <property type="entry name" value="Ribonuclease_Y"/>
</dbReference>
<dbReference type="InterPro" id="IPR022711">
    <property type="entry name" value="RNase_Y_N"/>
</dbReference>
<dbReference type="NCBIfam" id="TIGR00277">
    <property type="entry name" value="HDIG"/>
    <property type="match status" value="1"/>
</dbReference>
<dbReference type="NCBIfam" id="TIGR03319">
    <property type="entry name" value="RNase_Y"/>
    <property type="match status" value="1"/>
</dbReference>
<dbReference type="PANTHER" id="PTHR12826">
    <property type="entry name" value="RIBONUCLEASE Y"/>
    <property type="match status" value="1"/>
</dbReference>
<dbReference type="PANTHER" id="PTHR12826:SF15">
    <property type="entry name" value="RIBONUCLEASE Y"/>
    <property type="match status" value="1"/>
</dbReference>
<dbReference type="Pfam" id="PF01966">
    <property type="entry name" value="HD"/>
    <property type="match status" value="1"/>
</dbReference>
<dbReference type="Pfam" id="PF00013">
    <property type="entry name" value="KH_1"/>
    <property type="match status" value="1"/>
</dbReference>
<dbReference type="Pfam" id="PF12072">
    <property type="entry name" value="RNase_Y_N"/>
    <property type="match status" value="1"/>
</dbReference>
<dbReference type="SMART" id="SM00471">
    <property type="entry name" value="HDc"/>
    <property type="match status" value="1"/>
</dbReference>
<dbReference type="SMART" id="SM00322">
    <property type="entry name" value="KH"/>
    <property type="match status" value="1"/>
</dbReference>
<dbReference type="SUPFAM" id="SSF54791">
    <property type="entry name" value="Eukaryotic type KH-domain (KH-domain type I)"/>
    <property type="match status" value="1"/>
</dbReference>
<dbReference type="SUPFAM" id="SSF109604">
    <property type="entry name" value="HD-domain/PDEase-like"/>
    <property type="match status" value="1"/>
</dbReference>
<dbReference type="PROSITE" id="PS51831">
    <property type="entry name" value="HD"/>
    <property type="match status" value="1"/>
</dbReference>
<dbReference type="PROSITE" id="PS50084">
    <property type="entry name" value="KH_TYPE_1"/>
    <property type="match status" value="1"/>
</dbReference>
<reference key="1">
    <citation type="submission" date="2006-10" db="EMBL/GenBank/DDBJ databases">
        <title>Complete sequence of chromosome of Pelobacter propionicus DSM 2379.</title>
        <authorList>
            <consortium name="US DOE Joint Genome Institute"/>
            <person name="Copeland A."/>
            <person name="Lucas S."/>
            <person name="Lapidus A."/>
            <person name="Barry K."/>
            <person name="Detter J.C."/>
            <person name="Glavina del Rio T."/>
            <person name="Hammon N."/>
            <person name="Israni S."/>
            <person name="Dalin E."/>
            <person name="Tice H."/>
            <person name="Pitluck S."/>
            <person name="Saunders E."/>
            <person name="Brettin T."/>
            <person name="Bruce D."/>
            <person name="Han C."/>
            <person name="Tapia R."/>
            <person name="Schmutz J."/>
            <person name="Larimer F."/>
            <person name="Land M."/>
            <person name="Hauser L."/>
            <person name="Kyrpides N."/>
            <person name="Kim E."/>
            <person name="Lovley D."/>
            <person name="Richardson P."/>
        </authorList>
    </citation>
    <scope>NUCLEOTIDE SEQUENCE [LARGE SCALE GENOMIC DNA]</scope>
    <source>
        <strain>DSM 2379 / NBRC 103807 / OttBd1</strain>
    </source>
</reference>
<proteinExistence type="inferred from homology"/>
<keyword id="KW-1003">Cell membrane</keyword>
<keyword id="KW-0255">Endonuclease</keyword>
<keyword id="KW-0378">Hydrolase</keyword>
<keyword id="KW-0472">Membrane</keyword>
<keyword id="KW-0540">Nuclease</keyword>
<keyword id="KW-1185">Reference proteome</keyword>
<keyword id="KW-0694">RNA-binding</keyword>
<keyword id="KW-0812">Transmembrane</keyword>
<keyword id="KW-1133">Transmembrane helix</keyword>
<sequence>MQVSIWMLVITVLAAVAAYFAGSRVNKKDSGLIVKQSEELAAKMIDDARREAETITKEADLKARAEIIEAKAGHDREITEKKKDLQILEKRLQQKEENLDKKFGLIEQKELDMLKKEQSFVAREQNLAAKSEELSRASDVQQAKLEEISGMSASEAKKELMTSMEDEAKHDAAKRIKAIEEEARETADKKAKEIISLAVQRYAGEYVAEKTVSVVPLPSDEMKGRIIGREGRNIRALEAATGIDLIIDDTPEAVILSGFNPVRREVARMSLEKLIGDGRIHPGRIEEVVAKATEEVDLGIKEAGERAAFDLGVHGIHPEIIKLIGRLKYRTSYTQNIYQHSLEVAFICGIMAAELGINVKQAKRAGLLHDLGKAVDHEVEGSHAVIGADLARKYGESAKIVHAIMAHHEDEKPNSVLAVLVQAADALSGARPGARREMMETYVKRLDDLERIATSFGGVTNSFAIQAGREIRVMVSSDHVTDEQSLIMARDIAKKIEAEMTYPGQIKVNVIRETRAVEYAR</sequence>
<gene>
    <name evidence="1" type="primary">rny</name>
    <name type="ordered locus">Ppro_3312</name>
</gene>
<accession>A1AU84</accession>
<organism>
    <name type="scientific">Pelobacter propionicus (strain DSM 2379 / NBRC 103807 / OttBd1)</name>
    <dbReference type="NCBI Taxonomy" id="338966"/>
    <lineage>
        <taxon>Bacteria</taxon>
        <taxon>Pseudomonadati</taxon>
        <taxon>Thermodesulfobacteriota</taxon>
        <taxon>Desulfuromonadia</taxon>
        <taxon>Desulfuromonadales</taxon>
        <taxon>Desulfuromonadaceae</taxon>
        <taxon>Pelobacter</taxon>
    </lineage>
</organism>
<comment type="function">
    <text evidence="1">Endoribonuclease that initiates mRNA decay.</text>
</comment>
<comment type="subcellular location">
    <subcellularLocation>
        <location evidence="1">Cell membrane</location>
        <topology evidence="1">Single-pass membrane protein</topology>
    </subcellularLocation>
</comment>
<comment type="similarity">
    <text evidence="1">Belongs to the RNase Y family.</text>
</comment>
<protein>
    <recommendedName>
        <fullName evidence="1">Ribonuclease Y</fullName>
        <shortName evidence="1">RNase Y</shortName>
        <ecNumber evidence="1">3.1.-.-</ecNumber>
    </recommendedName>
</protein>
<name>RNY_PELPD</name>